<gene>
    <name evidence="1" type="primary">cca</name>
    <name type="ordered locus">SGO_1117</name>
</gene>
<proteinExistence type="inferred from homology"/>
<feature type="chain" id="PRO_1000085823" description="CCA-adding enzyme">
    <location>
        <begin position="1"/>
        <end position="399"/>
    </location>
</feature>
<feature type="binding site" evidence="1">
    <location>
        <position position="32"/>
    </location>
    <ligand>
        <name>ATP</name>
        <dbReference type="ChEBI" id="CHEBI:30616"/>
    </ligand>
</feature>
<feature type="binding site" evidence="1">
    <location>
        <position position="32"/>
    </location>
    <ligand>
        <name>CTP</name>
        <dbReference type="ChEBI" id="CHEBI:37563"/>
    </ligand>
</feature>
<feature type="binding site" evidence="1">
    <location>
        <position position="35"/>
    </location>
    <ligand>
        <name>ATP</name>
        <dbReference type="ChEBI" id="CHEBI:30616"/>
    </ligand>
</feature>
<feature type="binding site" evidence="1">
    <location>
        <position position="35"/>
    </location>
    <ligand>
        <name>CTP</name>
        <dbReference type="ChEBI" id="CHEBI:37563"/>
    </ligand>
</feature>
<feature type="binding site" evidence="1">
    <location>
        <position position="45"/>
    </location>
    <ligand>
        <name>Mg(2+)</name>
        <dbReference type="ChEBI" id="CHEBI:18420"/>
    </ligand>
</feature>
<feature type="binding site" evidence="1">
    <location>
        <position position="47"/>
    </location>
    <ligand>
        <name>Mg(2+)</name>
        <dbReference type="ChEBI" id="CHEBI:18420"/>
    </ligand>
</feature>
<feature type="binding site" evidence="1">
    <location>
        <position position="116"/>
    </location>
    <ligand>
        <name>ATP</name>
        <dbReference type="ChEBI" id="CHEBI:30616"/>
    </ligand>
</feature>
<feature type="binding site" evidence="1">
    <location>
        <position position="116"/>
    </location>
    <ligand>
        <name>CTP</name>
        <dbReference type="ChEBI" id="CHEBI:37563"/>
    </ligand>
</feature>
<feature type="binding site" evidence="1">
    <location>
        <position position="159"/>
    </location>
    <ligand>
        <name>ATP</name>
        <dbReference type="ChEBI" id="CHEBI:30616"/>
    </ligand>
</feature>
<feature type="binding site" evidence="1">
    <location>
        <position position="159"/>
    </location>
    <ligand>
        <name>CTP</name>
        <dbReference type="ChEBI" id="CHEBI:37563"/>
    </ligand>
</feature>
<feature type="binding site" evidence="1">
    <location>
        <position position="162"/>
    </location>
    <ligand>
        <name>ATP</name>
        <dbReference type="ChEBI" id="CHEBI:30616"/>
    </ligand>
</feature>
<feature type="binding site" evidence="1">
    <location>
        <position position="162"/>
    </location>
    <ligand>
        <name>CTP</name>
        <dbReference type="ChEBI" id="CHEBI:37563"/>
    </ligand>
</feature>
<feature type="binding site" evidence="1">
    <location>
        <position position="165"/>
    </location>
    <ligand>
        <name>ATP</name>
        <dbReference type="ChEBI" id="CHEBI:30616"/>
    </ligand>
</feature>
<feature type="binding site" evidence="1">
    <location>
        <position position="165"/>
    </location>
    <ligand>
        <name>CTP</name>
        <dbReference type="ChEBI" id="CHEBI:37563"/>
    </ligand>
</feature>
<feature type="binding site" evidence="1">
    <location>
        <position position="168"/>
    </location>
    <ligand>
        <name>ATP</name>
        <dbReference type="ChEBI" id="CHEBI:30616"/>
    </ligand>
</feature>
<feature type="binding site" evidence="1">
    <location>
        <position position="168"/>
    </location>
    <ligand>
        <name>CTP</name>
        <dbReference type="ChEBI" id="CHEBI:37563"/>
    </ligand>
</feature>
<organism>
    <name type="scientific">Streptococcus gordonii (strain Challis / ATCC 35105 / BCRC 15272 / CH1 / DL1 / V288)</name>
    <dbReference type="NCBI Taxonomy" id="467705"/>
    <lineage>
        <taxon>Bacteria</taxon>
        <taxon>Bacillati</taxon>
        <taxon>Bacillota</taxon>
        <taxon>Bacilli</taxon>
        <taxon>Lactobacillales</taxon>
        <taxon>Streptococcaceae</taxon>
        <taxon>Streptococcus</taxon>
    </lineage>
</organism>
<accession>A8AX96</accession>
<evidence type="ECO:0000255" key="1">
    <source>
        <dbReference type="HAMAP-Rule" id="MF_01263"/>
    </source>
</evidence>
<dbReference type="EC" id="2.7.7.72" evidence="1"/>
<dbReference type="EMBL" id="CP000725">
    <property type="protein sequence ID" value="ABV09916.1"/>
    <property type="molecule type" value="Genomic_DNA"/>
</dbReference>
<dbReference type="RefSeq" id="WP_012000528.1">
    <property type="nucleotide sequence ID" value="NC_009785.1"/>
</dbReference>
<dbReference type="SMR" id="A8AX96"/>
<dbReference type="STRING" id="467705.SGO_1117"/>
<dbReference type="KEGG" id="sgo:SGO_1117"/>
<dbReference type="eggNOG" id="COG0617">
    <property type="taxonomic scope" value="Bacteria"/>
</dbReference>
<dbReference type="HOGENOM" id="CLU_015961_3_0_9"/>
<dbReference type="Proteomes" id="UP000001131">
    <property type="component" value="Chromosome"/>
</dbReference>
<dbReference type="GO" id="GO:0005524">
    <property type="term" value="F:ATP binding"/>
    <property type="evidence" value="ECO:0007669"/>
    <property type="project" value="UniProtKB-UniRule"/>
</dbReference>
<dbReference type="GO" id="GO:0004810">
    <property type="term" value="F:CCA tRNA nucleotidyltransferase activity"/>
    <property type="evidence" value="ECO:0007669"/>
    <property type="project" value="UniProtKB-UniRule"/>
</dbReference>
<dbReference type="GO" id="GO:0000287">
    <property type="term" value="F:magnesium ion binding"/>
    <property type="evidence" value="ECO:0007669"/>
    <property type="project" value="UniProtKB-UniRule"/>
</dbReference>
<dbReference type="GO" id="GO:0000049">
    <property type="term" value="F:tRNA binding"/>
    <property type="evidence" value="ECO:0007669"/>
    <property type="project" value="UniProtKB-UniRule"/>
</dbReference>
<dbReference type="GO" id="GO:0042245">
    <property type="term" value="P:RNA repair"/>
    <property type="evidence" value="ECO:0007669"/>
    <property type="project" value="UniProtKB-KW"/>
</dbReference>
<dbReference type="GO" id="GO:0001680">
    <property type="term" value="P:tRNA 3'-terminal CCA addition"/>
    <property type="evidence" value="ECO:0007669"/>
    <property type="project" value="UniProtKB-UniRule"/>
</dbReference>
<dbReference type="CDD" id="cd05398">
    <property type="entry name" value="NT_ClassII-CCAase"/>
    <property type="match status" value="1"/>
</dbReference>
<dbReference type="Gene3D" id="1.10.110.30">
    <property type="match status" value="1"/>
</dbReference>
<dbReference type="Gene3D" id="1.10.246.80">
    <property type="match status" value="1"/>
</dbReference>
<dbReference type="Gene3D" id="1.20.58.560">
    <property type="match status" value="1"/>
</dbReference>
<dbReference type="Gene3D" id="3.30.460.10">
    <property type="entry name" value="Beta Polymerase, domain 2"/>
    <property type="match status" value="1"/>
</dbReference>
<dbReference type="HAMAP" id="MF_01263">
    <property type="entry name" value="CCA_bact_type3"/>
    <property type="match status" value="1"/>
</dbReference>
<dbReference type="InterPro" id="IPR050264">
    <property type="entry name" value="Bact_CCA-adding_enz_type3_sf"/>
</dbReference>
<dbReference type="InterPro" id="IPR032810">
    <property type="entry name" value="CCA-adding_enz_C"/>
</dbReference>
<dbReference type="InterPro" id="IPR023068">
    <property type="entry name" value="CCA-adding_enz_firmicutes"/>
</dbReference>
<dbReference type="InterPro" id="IPR043519">
    <property type="entry name" value="NT_sf"/>
</dbReference>
<dbReference type="InterPro" id="IPR002646">
    <property type="entry name" value="PolA_pol_head_dom"/>
</dbReference>
<dbReference type="InterPro" id="IPR032828">
    <property type="entry name" value="PolyA_RNA-bd"/>
</dbReference>
<dbReference type="NCBIfam" id="NF009814">
    <property type="entry name" value="PRK13299.1"/>
    <property type="match status" value="1"/>
</dbReference>
<dbReference type="PANTHER" id="PTHR46173">
    <property type="entry name" value="CCA TRNA NUCLEOTIDYLTRANSFERASE 1, MITOCHONDRIAL"/>
    <property type="match status" value="1"/>
</dbReference>
<dbReference type="PANTHER" id="PTHR46173:SF1">
    <property type="entry name" value="CCA TRNA NUCLEOTIDYLTRANSFERASE 1, MITOCHONDRIAL"/>
    <property type="match status" value="1"/>
</dbReference>
<dbReference type="Pfam" id="PF01743">
    <property type="entry name" value="PolyA_pol"/>
    <property type="match status" value="1"/>
</dbReference>
<dbReference type="Pfam" id="PF12627">
    <property type="entry name" value="PolyA_pol_RNAbd"/>
    <property type="match status" value="1"/>
</dbReference>
<dbReference type="Pfam" id="PF13735">
    <property type="entry name" value="tRNA_NucTran2_2"/>
    <property type="match status" value="1"/>
</dbReference>
<dbReference type="SUPFAM" id="SSF81301">
    <property type="entry name" value="Nucleotidyltransferase"/>
    <property type="match status" value="1"/>
</dbReference>
<dbReference type="SUPFAM" id="SSF81891">
    <property type="entry name" value="Poly A polymerase C-terminal region-like"/>
    <property type="match status" value="1"/>
</dbReference>
<protein>
    <recommendedName>
        <fullName evidence="1">CCA-adding enzyme</fullName>
        <ecNumber evidence="1">2.7.7.72</ecNumber>
    </recommendedName>
    <alternativeName>
        <fullName evidence="1">CCA tRNA nucleotidyltransferase</fullName>
    </alternativeName>
    <alternativeName>
        <fullName evidence="1">tRNA CCA-pyrophosphorylase</fullName>
    </alternativeName>
    <alternativeName>
        <fullName evidence="1">tRNA adenylyl-/cytidylyl- transferase</fullName>
    </alternativeName>
    <alternativeName>
        <fullName evidence="1">tRNA nucleotidyltransferase</fullName>
    </alternativeName>
    <alternativeName>
        <fullName evidence="1">tRNA-NT</fullName>
    </alternativeName>
</protein>
<reference key="1">
    <citation type="journal article" date="2007" name="J. Bacteriol.">
        <title>Genome-wide transcriptional changes in Streptococcus gordonii in response to competence signaling peptide.</title>
        <authorList>
            <person name="Vickerman M.M."/>
            <person name="Iobst S."/>
            <person name="Jesionowski A.M."/>
            <person name="Gill S.R."/>
        </authorList>
    </citation>
    <scope>NUCLEOTIDE SEQUENCE [LARGE SCALE GENOMIC DNA]</scope>
    <source>
        <strain>Challis / ATCC 35105 / BCRC 15272 / CH1 / DL1 / V288</strain>
    </source>
</reference>
<comment type="function">
    <text evidence="1">Catalyzes the addition and repair of the essential 3'-terminal CCA sequence in tRNAs without using a nucleic acid template. Adds these three nucleotides in the order of C, C, and A to the tRNA nucleotide-73, using CTP and ATP as substrates and producing inorganic pyrophosphate. tRNA 3'-terminal CCA addition is required both for tRNA processing and repair. Also involved in tRNA surveillance by mediating tandem CCA addition to generate a CCACCA at the 3' terminus of unstable tRNAs. While stable tRNAs receive only 3'-terminal CCA, unstable tRNAs are marked with CCACCA and rapidly degraded.</text>
</comment>
<comment type="catalytic activity">
    <reaction evidence="1">
        <text>a tRNA precursor + 2 CTP + ATP = a tRNA with a 3' CCA end + 3 diphosphate</text>
        <dbReference type="Rhea" id="RHEA:14433"/>
        <dbReference type="Rhea" id="RHEA-COMP:10465"/>
        <dbReference type="Rhea" id="RHEA-COMP:10468"/>
        <dbReference type="ChEBI" id="CHEBI:30616"/>
        <dbReference type="ChEBI" id="CHEBI:33019"/>
        <dbReference type="ChEBI" id="CHEBI:37563"/>
        <dbReference type="ChEBI" id="CHEBI:74896"/>
        <dbReference type="ChEBI" id="CHEBI:83071"/>
        <dbReference type="EC" id="2.7.7.72"/>
    </reaction>
</comment>
<comment type="catalytic activity">
    <reaction evidence="1">
        <text>a tRNA with a 3' CCA end + 2 CTP + ATP = a tRNA with a 3' CCACCA end + 3 diphosphate</text>
        <dbReference type="Rhea" id="RHEA:76235"/>
        <dbReference type="Rhea" id="RHEA-COMP:10468"/>
        <dbReference type="Rhea" id="RHEA-COMP:18655"/>
        <dbReference type="ChEBI" id="CHEBI:30616"/>
        <dbReference type="ChEBI" id="CHEBI:33019"/>
        <dbReference type="ChEBI" id="CHEBI:37563"/>
        <dbReference type="ChEBI" id="CHEBI:83071"/>
        <dbReference type="ChEBI" id="CHEBI:195187"/>
    </reaction>
    <physiologicalReaction direction="left-to-right" evidence="1">
        <dbReference type="Rhea" id="RHEA:76236"/>
    </physiologicalReaction>
</comment>
<comment type="cofactor">
    <cofactor evidence="1">
        <name>Mg(2+)</name>
        <dbReference type="ChEBI" id="CHEBI:18420"/>
    </cofactor>
</comment>
<comment type="subunit">
    <text evidence="1">Homodimer.</text>
</comment>
<comment type="miscellaneous">
    <text evidence="1">A single active site specifically recognizes both ATP and CTP and is responsible for their addition.</text>
</comment>
<comment type="similarity">
    <text evidence="1">Belongs to the tRNA nucleotidyltransferase/poly(A) polymerase family. Bacterial CCA-adding enzyme type 3 subfamily.</text>
</comment>
<name>CCA_STRGC</name>
<sequence>MRLETLPSEFQEALPVLEKIKAAGFEAYFVGGSVRDALLQRPIHDVDIASSSYPEETKRIFDRTVDVGIEHGTVLVLENNREYEVTTFRTEDVYVDYRRPSKVSFVRSLEEDLKRRDFTINALALDENGQLIDLFQGLDDLENRILRAVGTPAERFNEDALRIMRGFRFQATLNFDLEQDTLSAMTDCAPLLEKISVERIFIEFDKLLLAPFWRKGLEALLTSGAIEFLPDLKGSRAKLEQLFELDSDFCFSASEQAWAALLLALKTQEVQRFLRIWKTSREFAKRVADIVEIVTIRSERDLTKRDCYDYDIDLLLQAEELRQAQGLAVDFSAIHNLDASLTIHSKQEMVVNGGMLMRDFGFEPGPKLGQILKELEYAIVDGHLPNDLEAIYAYIKEKK</sequence>
<keyword id="KW-0067">ATP-binding</keyword>
<keyword id="KW-0460">Magnesium</keyword>
<keyword id="KW-0479">Metal-binding</keyword>
<keyword id="KW-0547">Nucleotide-binding</keyword>
<keyword id="KW-0548">Nucleotidyltransferase</keyword>
<keyword id="KW-1185">Reference proteome</keyword>
<keyword id="KW-0692">RNA repair</keyword>
<keyword id="KW-0694">RNA-binding</keyword>
<keyword id="KW-0808">Transferase</keyword>
<keyword id="KW-0819">tRNA processing</keyword>